<dbReference type="EMBL" id="AE016823">
    <property type="protein sequence ID" value="AAS70293.1"/>
    <property type="molecule type" value="Genomic_DNA"/>
</dbReference>
<dbReference type="RefSeq" id="WP_000232823.1">
    <property type="nucleotide sequence ID" value="NC_005823.1"/>
</dbReference>
<dbReference type="SMR" id="Q72RP1"/>
<dbReference type="GeneID" id="61174136"/>
<dbReference type="KEGG" id="lic:LIC_11704"/>
<dbReference type="HOGENOM" id="CLU_159258_1_2_12"/>
<dbReference type="Proteomes" id="UP000007037">
    <property type="component" value="Chromosome I"/>
</dbReference>
<dbReference type="GO" id="GO:1990904">
    <property type="term" value="C:ribonucleoprotein complex"/>
    <property type="evidence" value="ECO:0007669"/>
    <property type="project" value="UniProtKB-KW"/>
</dbReference>
<dbReference type="GO" id="GO:0005840">
    <property type="term" value="C:ribosome"/>
    <property type="evidence" value="ECO:0007669"/>
    <property type="project" value="UniProtKB-KW"/>
</dbReference>
<dbReference type="GO" id="GO:0003735">
    <property type="term" value="F:structural constituent of ribosome"/>
    <property type="evidence" value="ECO:0007669"/>
    <property type="project" value="InterPro"/>
</dbReference>
<dbReference type="GO" id="GO:0006412">
    <property type="term" value="P:translation"/>
    <property type="evidence" value="ECO:0007669"/>
    <property type="project" value="UniProtKB-UniRule"/>
</dbReference>
<dbReference type="Gene3D" id="1.20.5.1150">
    <property type="entry name" value="Ribosomal protein S8"/>
    <property type="match status" value="1"/>
</dbReference>
<dbReference type="HAMAP" id="MF_00358">
    <property type="entry name" value="Ribosomal_bS21"/>
    <property type="match status" value="1"/>
</dbReference>
<dbReference type="InterPro" id="IPR001911">
    <property type="entry name" value="Ribosomal_bS21"/>
</dbReference>
<dbReference type="InterPro" id="IPR038380">
    <property type="entry name" value="Ribosomal_bS21_sf"/>
</dbReference>
<dbReference type="NCBIfam" id="TIGR00030">
    <property type="entry name" value="S21p"/>
    <property type="match status" value="1"/>
</dbReference>
<dbReference type="PANTHER" id="PTHR21109">
    <property type="entry name" value="MITOCHONDRIAL 28S RIBOSOMAL PROTEIN S21"/>
    <property type="match status" value="1"/>
</dbReference>
<dbReference type="PANTHER" id="PTHR21109:SF22">
    <property type="entry name" value="SMALL RIBOSOMAL SUBUNIT PROTEIN BS21"/>
    <property type="match status" value="1"/>
</dbReference>
<dbReference type="Pfam" id="PF01165">
    <property type="entry name" value="Ribosomal_S21"/>
    <property type="match status" value="1"/>
</dbReference>
<dbReference type="PRINTS" id="PR00976">
    <property type="entry name" value="RIBOSOMALS21"/>
</dbReference>
<evidence type="ECO:0000255" key="1">
    <source>
        <dbReference type="HAMAP-Rule" id="MF_00358"/>
    </source>
</evidence>
<evidence type="ECO:0000256" key="2">
    <source>
        <dbReference type="SAM" id="MobiDB-lite"/>
    </source>
</evidence>
<evidence type="ECO:0000305" key="3"/>
<accession>Q72RP1</accession>
<reference key="1">
    <citation type="journal article" date="2004" name="J. Bacteriol.">
        <title>Comparative genomics of two Leptospira interrogans serovars reveals novel insights into physiology and pathogenesis.</title>
        <authorList>
            <person name="Nascimento A.L.T.O."/>
            <person name="Ko A.I."/>
            <person name="Martins E.A.L."/>
            <person name="Monteiro-Vitorello C.B."/>
            <person name="Ho P.L."/>
            <person name="Haake D.A."/>
            <person name="Verjovski-Almeida S."/>
            <person name="Hartskeerl R.A."/>
            <person name="Marques M.V."/>
            <person name="Oliveira M.C."/>
            <person name="Menck C.F.M."/>
            <person name="Leite L.C.C."/>
            <person name="Carrer H."/>
            <person name="Coutinho L.L."/>
            <person name="Degrave W.M."/>
            <person name="Dellagostin O.A."/>
            <person name="El-Dorry H."/>
            <person name="Ferro E.S."/>
            <person name="Ferro M.I.T."/>
            <person name="Furlan L.R."/>
            <person name="Gamberini M."/>
            <person name="Giglioti E.A."/>
            <person name="Goes-Neto A."/>
            <person name="Goldman G.H."/>
            <person name="Goldman M.H.S."/>
            <person name="Harakava R."/>
            <person name="Jeronimo S.M.B."/>
            <person name="Junqueira-de-Azevedo I.L.M."/>
            <person name="Kimura E.T."/>
            <person name="Kuramae E.E."/>
            <person name="Lemos E.G.M."/>
            <person name="Lemos M.V.F."/>
            <person name="Marino C.L."/>
            <person name="Nunes L.R."/>
            <person name="de Oliveira R.C."/>
            <person name="Pereira G.G."/>
            <person name="Reis M.S."/>
            <person name="Schriefer A."/>
            <person name="Siqueira W.J."/>
            <person name="Sommer P."/>
            <person name="Tsai S.M."/>
            <person name="Simpson A.J.G."/>
            <person name="Ferro J.A."/>
            <person name="Camargo L.E.A."/>
            <person name="Kitajima J.P."/>
            <person name="Setubal J.C."/>
            <person name="Van Sluys M.A."/>
        </authorList>
    </citation>
    <scope>NUCLEOTIDE SEQUENCE [LARGE SCALE GENOMIC DNA]</scope>
    <source>
        <strain>Fiocruz L1-130</strain>
    </source>
</reference>
<feature type="chain" id="PRO_0000178347" description="Small ribosomal subunit protein bS21">
    <location>
        <begin position="1"/>
        <end position="69"/>
    </location>
</feature>
<feature type="region of interest" description="Disordered" evidence="2">
    <location>
        <begin position="49"/>
        <end position="69"/>
    </location>
</feature>
<name>RS21_LEPIC</name>
<proteinExistence type="inferred from homology"/>
<sequence length="69" mass="7973">MVGIIVKDGESIESALKRFKRDCANAGIMSEIKRREYFEKPSIKKKKAIESAKRKAEKKKRLFSKKDKA</sequence>
<keyword id="KW-0687">Ribonucleoprotein</keyword>
<keyword id="KW-0689">Ribosomal protein</keyword>
<comment type="similarity">
    <text evidence="1">Belongs to the bacterial ribosomal protein bS21 family.</text>
</comment>
<gene>
    <name evidence="1" type="primary">rpsU</name>
    <name type="ordered locus">LIC_11704</name>
</gene>
<protein>
    <recommendedName>
        <fullName evidence="1">Small ribosomal subunit protein bS21</fullName>
    </recommendedName>
    <alternativeName>
        <fullName evidence="3">30S ribosomal protein S21</fullName>
    </alternativeName>
</protein>
<organism>
    <name type="scientific">Leptospira interrogans serogroup Icterohaemorrhagiae serovar copenhageni (strain Fiocruz L1-130)</name>
    <dbReference type="NCBI Taxonomy" id="267671"/>
    <lineage>
        <taxon>Bacteria</taxon>
        <taxon>Pseudomonadati</taxon>
        <taxon>Spirochaetota</taxon>
        <taxon>Spirochaetia</taxon>
        <taxon>Leptospirales</taxon>
        <taxon>Leptospiraceae</taxon>
        <taxon>Leptospira</taxon>
    </lineage>
</organism>